<feature type="chain" id="PRO_0000223746" description="Acetyl-coenzyme A carboxylase carboxyl transferase subunit alpha">
    <location>
        <begin position="1"/>
        <end position="323"/>
    </location>
</feature>
<feature type="domain" description="CoA carboxyltransferase C-terminal" evidence="2">
    <location>
        <begin position="39"/>
        <end position="293"/>
    </location>
</feature>
<accession>Q63ST0</accession>
<evidence type="ECO:0000255" key="1">
    <source>
        <dbReference type="HAMAP-Rule" id="MF_00823"/>
    </source>
</evidence>
<evidence type="ECO:0000255" key="2">
    <source>
        <dbReference type="PROSITE-ProRule" id="PRU01137"/>
    </source>
</evidence>
<comment type="function">
    <text evidence="1">Component of the acetyl coenzyme A carboxylase (ACC) complex. First, biotin carboxylase catalyzes the carboxylation of biotin on its carrier protein (BCCP) and then the CO(2) group is transferred by the carboxyltransferase to acetyl-CoA to form malonyl-CoA.</text>
</comment>
<comment type="catalytic activity">
    <reaction evidence="1">
        <text>N(6)-carboxybiotinyl-L-lysyl-[protein] + acetyl-CoA = N(6)-biotinyl-L-lysyl-[protein] + malonyl-CoA</text>
        <dbReference type="Rhea" id="RHEA:54728"/>
        <dbReference type="Rhea" id="RHEA-COMP:10505"/>
        <dbReference type="Rhea" id="RHEA-COMP:10506"/>
        <dbReference type="ChEBI" id="CHEBI:57288"/>
        <dbReference type="ChEBI" id="CHEBI:57384"/>
        <dbReference type="ChEBI" id="CHEBI:83144"/>
        <dbReference type="ChEBI" id="CHEBI:83145"/>
        <dbReference type="EC" id="2.1.3.15"/>
    </reaction>
</comment>
<comment type="pathway">
    <text evidence="1">Lipid metabolism; malonyl-CoA biosynthesis; malonyl-CoA from acetyl-CoA: step 1/1.</text>
</comment>
<comment type="subunit">
    <text evidence="1">Acetyl-CoA carboxylase is a heterohexamer composed of biotin carboxyl carrier protein (AccB), biotin carboxylase (AccC) and two subunits each of ACCase subunit alpha (AccA) and ACCase subunit beta (AccD).</text>
</comment>
<comment type="subcellular location">
    <subcellularLocation>
        <location evidence="1">Cytoplasm</location>
    </subcellularLocation>
</comment>
<comment type="similarity">
    <text evidence="1">Belongs to the AccA family.</text>
</comment>
<sequence length="323" mass="35667">MKTTFLDFEQPIAELEAKIEELRFVQDDSAVDISEEIERLSKKSQQLTKDLYANLTPWQVSQIARHPQRPYTLDYVSELFTDFHELHGDRAFADDQSIVGGLARFNGHACMVIGHQKGRDTKERAARNFGMPRPEGYRKAERLMRVAEKFGLPIFTFVDTPGAYPGVGAEERGQSEAIGHNLYVMAELKTPIIATVIGEGGSGGALAIAVADTVMMLQFSTYSVISPEGCASILWKSAAKAPEAAEALGLTAHRLKALGLIDKIVNEPLGGAHRDPKGMAALLRRALGDSLRQFQGMSVDALRERRFERLMAYGKFKETTPRA</sequence>
<keyword id="KW-0067">ATP-binding</keyword>
<keyword id="KW-0963">Cytoplasm</keyword>
<keyword id="KW-0275">Fatty acid biosynthesis</keyword>
<keyword id="KW-0276">Fatty acid metabolism</keyword>
<keyword id="KW-0444">Lipid biosynthesis</keyword>
<keyword id="KW-0443">Lipid metabolism</keyword>
<keyword id="KW-0547">Nucleotide-binding</keyword>
<keyword id="KW-1185">Reference proteome</keyword>
<keyword id="KW-0808">Transferase</keyword>
<dbReference type="EC" id="2.1.3.15" evidence="1"/>
<dbReference type="EMBL" id="BX571965">
    <property type="protein sequence ID" value="CAH36243.1"/>
    <property type="molecule type" value="Genomic_DNA"/>
</dbReference>
<dbReference type="RefSeq" id="WP_004193249.1">
    <property type="nucleotide sequence ID" value="NZ_CP009538.1"/>
</dbReference>
<dbReference type="RefSeq" id="YP_108836.1">
    <property type="nucleotide sequence ID" value="NC_006350.1"/>
</dbReference>
<dbReference type="SMR" id="Q63ST0"/>
<dbReference type="STRING" id="272560.BPSL2241"/>
<dbReference type="KEGG" id="bps:BPSL2241"/>
<dbReference type="PATRIC" id="fig|272560.51.peg.3196"/>
<dbReference type="eggNOG" id="COG0825">
    <property type="taxonomic scope" value="Bacteria"/>
</dbReference>
<dbReference type="UniPathway" id="UPA00655">
    <property type="reaction ID" value="UER00711"/>
</dbReference>
<dbReference type="Proteomes" id="UP000000605">
    <property type="component" value="Chromosome 1"/>
</dbReference>
<dbReference type="GO" id="GO:0009317">
    <property type="term" value="C:acetyl-CoA carboxylase complex"/>
    <property type="evidence" value="ECO:0007669"/>
    <property type="project" value="InterPro"/>
</dbReference>
<dbReference type="GO" id="GO:0003989">
    <property type="term" value="F:acetyl-CoA carboxylase activity"/>
    <property type="evidence" value="ECO:0007669"/>
    <property type="project" value="InterPro"/>
</dbReference>
<dbReference type="GO" id="GO:0005524">
    <property type="term" value="F:ATP binding"/>
    <property type="evidence" value="ECO:0007669"/>
    <property type="project" value="UniProtKB-KW"/>
</dbReference>
<dbReference type="GO" id="GO:0016743">
    <property type="term" value="F:carboxyl- or carbamoyltransferase activity"/>
    <property type="evidence" value="ECO:0007669"/>
    <property type="project" value="UniProtKB-UniRule"/>
</dbReference>
<dbReference type="GO" id="GO:0006633">
    <property type="term" value="P:fatty acid biosynthetic process"/>
    <property type="evidence" value="ECO:0007669"/>
    <property type="project" value="UniProtKB-KW"/>
</dbReference>
<dbReference type="GO" id="GO:2001295">
    <property type="term" value="P:malonyl-CoA biosynthetic process"/>
    <property type="evidence" value="ECO:0007669"/>
    <property type="project" value="UniProtKB-UniRule"/>
</dbReference>
<dbReference type="Gene3D" id="3.90.226.10">
    <property type="entry name" value="2-enoyl-CoA Hydratase, Chain A, domain 1"/>
    <property type="match status" value="1"/>
</dbReference>
<dbReference type="HAMAP" id="MF_00823">
    <property type="entry name" value="AcetylCoA_CT_alpha"/>
    <property type="match status" value="1"/>
</dbReference>
<dbReference type="InterPro" id="IPR001095">
    <property type="entry name" value="Acetyl_CoA_COase_a_su"/>
</dbReference>
<dbReference type="InterPro" id="IPR029045">
    <property type="entry name" value="ClpP/crotonase-like_dom_sf"/>
</dbReference>
<dbReference type="InterPro" id="IPR011763">
    <property type="entry name" value="COA_CT_C"/>
</dbReference>
<dbReference type="NCBIfam" id="TIGR00513">
    <property type="entry name" value="accA"/>
    <property type="match status" value="1"/>
</dbReference>
<dbReference type="NCBIfam" id="NF041504">
    <property type="entry name" value="AccA_sub"/>
    <property type="match status" value="1"/>
</dbReference>
<dbReference type="NCBIfam" id="NF004344">
    <property type="entry name" value="PRK05724.1"/>
    <property type="match status" value="1"/>
</dbReference>
<dbReference type="PANTHER" id="PTHR42853">
    <property type="entry name" value="ACETYL-COENZYME A CARBOXYLASE CARBOXYL TRANSFERASE SUBUNIT ALPHA"/>
    <property type="match status" value="1"/>
</dbReference>
<dbReference type="PANTHER" id="PTHR42853:SF3">
    <property type="entry name" value="ACETYL-COENZYME A CARBOXYLASE CARBOXYL TRANSFERASE SUBUNIT ALPHA, CHLOROPLASTIC"/>
    <property type="match status" value="1"/>
</dbReference>
<dbReference type="Pfam" id="PF03255">
    <property type="entry name" value="ACCA"/>
    <property type="match status" value="1"/>
</dbReference>
<dbReference type="PRINTS" id="PR01069">
    <property type="entry name" value="ACCCTRFRASEA"/>
</dbReference>
<dbReference type="SUPFAM" id="SSF52096">
    <property type="entry name" value="ClpP/crotonase"/>
    <property type="match status" value="1"/>
</dbReference>
<dbReference type="PROSITE" id="PS50989">
    <property type="entry name" value="COA_CT_CTER"/>
    <property type="match status" value="1"/>
</dbReference>
<protein>
    <recommendedName>
        <fullName evidence="1">Acetyl-coenzyme A carboxylase carboxyl transferase subunit alpha</fullName>
        <shortName evidence="1">ACCase subunit alpha</shortName>
        <shortName evidence="1">Acetyl-CoA carboxylase carboxyltransferase subunit alpha</shortName>
        <ecNumber evidence="1">2.1.3.15</ecNumber>
    </recommendedName>
</protein>
<reference key="1">
    <citation type="journal article" date="2004" name="Proc. Natl. Acad. Sci. U.S.A.">
        <title>Genomic plasticity of the causative agent of melioidosis, Burkholderia pseudomallei.</title>
        <authorList>
            <person name="Holden M.T.G."/>
            <person name="Titball R.W."/>
            <person name="Peacock S.J."/>
            <person name="Cerdeno-Tarraga A.-M."/>
            <person name="Atkins T."/>
            <person name="Crossman L.C."/>
            <person name="Pitt T."/>
            <person name="Churcher C."/>
            <person name="Mungall K.L."/>
            <person name="Bentley S.D."/>
            <person name="Sebaihia M."/>
            <person name="Thomson N.R."/>
            <person name="Bason N."/>
            <person name="Beacham I.R."/>
            <person name="Brooks K."/>
            <person name="Brown K.A."/>
            <person name="Brown N.F."/>
            <person name="Challis G.L."/>
            <person name="Cherevach I."/>
            <person name="Chillingworth T."/>
            <person name="Cronin A."/>
            <person name="Crossett B."/>
            <person name="Davis P."/>
            <person name="DeShazer D."/>
            <person name="Feltwell T."/>
            <person name="Fraser A."/>
            <person name="Hance Z."/>
            <person name="Hauser H."/>
            <person name="Holroyd S."/>
            <person name="Jagels K."/>
            <person name="Keith K.E."/>
            <person name="Maddison M."/>
            <person name="Moule S."/>
            <person name="Price C."/>
            <person name="Quail M.A."/>
            <person name="Rabbinowitsch E."/>
            <person name="Rutherford K."/>
            <person name="Sanders M."/>
            <person name="Simmonds M."/>
            <person name="Songsivilai S."/>
            <person name="Stevens K."/>
            <person name="Tumapa S."/>
            <person name="Vesaratchavest M."/>
            <person name="Whitehead S."/>
            <person name="Yeats C."/>
            <person name="Barrell B.G."/>
            <person name="Oyston P.C.F."/>
            <person name="Parkhill J."/>
        </authorList>
    </citation>
    <scope>NUCLEOTIDE SEQUENCE [LARGE SCALE GENOMIC DNA]</scope>
    <source>
        <strain>K96243</strain>
    </source>
</reference>
<proteinExistence type="inferred from homology"/>
<name>ACCA_BURPS</name>
<organism>
    <name type="scientific">Burkholderia pseudomallei (strain K96243)</name>
    <dbReference type="NCBI Taxonomy" id="272560"/>
    <lineage>
        <taxon>Bacteria</taxon>
        <taxon>Pseudomonadati</taxon>
        <taxon>Pseudomonadota</taxon>
        <taxon>Betaproteobacteria</taxon>
        <taxon>Burkholderiales</taxon>
        <taxon>Burkholderiaceae</taxon>
        <taxon>Burkholderia</taxon>
        <taxon>pseudomallei group</taxon>
    </lineage>
</organism>
<gene>
    <name evidence="1" type="primary">accA</name>
    <name type="ordered locus">BPSL2241</name>
</gene>